<dbReference type="EC" id="3.2.1.14"/>
<dbReference type="GO" id="GO:0008061">
    <property type="term" value="F:chitin binding"/>
    <property type="evidence" value="ECO:0007669"/>
    <property type="project" value="UniProtKB-KW"/>
</dbReference>
<dbReference type="GO" id="GO:0008843">
    <property type="term" value="F:endochitinase activity"/>
    <property type="evidence" value="ECO:0007669"/>
    <property type="project" value="UniProtKB-EC"/>
</dbReference>
<dbReference type="GO" id="GO:0006032">
    <property type="term" value="P:chitin catabolic process"/>
    <property type="evidence" value="ECO:0007669"/>
    <property type="project" value="UniProtKB-KW"/>
</dbReference>
<dbReference type="GO" id="GO:0050832">
    <property type="term" value="P:defense response to fungus"/>
    <property type="evidence" value="ECO:0007669"/>
    <property type="project" value="UniProtKB-KW"/>
</dbReference>
<dbReference type="GO" id="GO:0031640">
    <property type="term" value="P:killing of cells of another organism"/>
    <property type="evidence" value="ECO:0007669"/>
    <property type="project" value="UniProtKB-KW"/>
</dbReference>
<dbReference type="GO" id="GO:0000272">
    <property type="term" value="P:polysaccharide catabolic process"/>
    <property type="evidence" value="ECO:0007669"/>
    <property type="project" value="UniProtKB-KW"/>
</dbReference>
<organism>
    <name type="scientific">Streptomyces violaceus</name>
    <name type="common">Streptomyces venezuelae</name>
    <dbReference type="NCBI Taxonomy" id="1936"/>
    <lineage>
        <taxon>Bacteria</taxon>
        <taxon>Bacillati</taxon>
        <taxon>Actinomycetota</taxon>
        <taxon>Actinomycetes</taxon>
        <taxon>Kitasatosporales</taxon>
        <taxon>Streptomycetaceae</taxon>
        <taxon>Streptomyces</taxon>
    </lineage>
</organism>
<feature type="chain" id="PRO_0000077047" description="Chitinase">
    <location>
        <begin position="1"/>
        <end position="15" status="greater than"/>
    </location>
</feature>
<feature type="non-terminal residue" evidence="3 4">
    <location>
        <position position="15"/>
    </location>
</feature>
<name>CHIT_STRVL</name>
<accession>P84754</accession>
<keyword id="KW-0929">Antimicrobial</keyword>
<keyword id="KW-0119">Carbohydrate metabolism</keyword>
<keyword id="KW-0146">Chitin degradation</keyword>
<keyword id="KW-0147">Chitin-binding</keyword>
<keyword id="KW-0903">Direct protein sequencing</keyword>
<keyword id="KW-0295">Fungicide</keyword>
<keyword id="KW-0326">Glycosidase</keyword>
<keyword id="KW-0378">Hydrolase</keyword>
<keyword id="KW-0624">Polysaccharide degradation</keyword>
<proteinExistence type="evidence at protein level"/>
<protein>
    <recommendedName>
        <fullName>Chitinase</fullName>
        <ecNumber>3.2.1.14</ecNumber>
    </recommendedName>
</protein>
<reference evidence="5" key="1">
    <citation type="thesis" date="2005" institute="Visva Bharati (Central University)" country="India">
        <title>Extracellular production of chitinase by Streptomyces venezuelae.</title>
        <authorList>
            <person name="Mukherjee G."/>
        </authorList>
    </citation>
    <scope>PROTEIN SEQUENCE</scope>
    <scope>FUNCTION</scope>
    <scope>CATALYTIC ACTIVITY</scope>
    <scope>ACTIVITY REGULATION</scope>
    <scope>BIOPHYSICOCHEMICAL PROPERTIES</scope>
    <source>
        <strain evidence="2">P10</strain>
    </source>
</reference>
<reference key="2">
    <citation type="journal article" date="2006" name="Curr. Microbiol.">
        <title>Purification, characterization, and antifungal activity of chitinase from Streptomyces venezuelae P(10).</title>
        <authorList>
            <person name="Mukherjee G."/>
            <person name="Sen S.K."/>
        </authorList>
    </citation>
    <scope>PROTEIN SEQUENCE</scope>
    <scope>FUNCTION</scope>
    <scope>CATALYTIC ACTIVITY</scope>
    <scope>ACTIVITY REGULATION</scope>
    <scope>BIOPHYSICOCHEMICAL PROPERTIES</scope>
    <source>
        <strain>P10</strain>
    </source>
</reference>
<evidence type="ECO:0000269" key="1">
    <source>
    </source>
</evidence>
<evidence type="ECO:0000269" key="2">
    <source ref="1"/>
</evidence>
<evidence type="ECO:0000303" key="3">
    <source>
    </source>
</evidence>
<evidence type="ECO:0000303" key="4">
    <source ref="1"/>
</evidence>
<evidence type="ECO:0000305" key="5"/>
<sequence length="15" mass="1639">EQPGGDKVNLGYFTN</sequence>
<comment type="function">
    <text evidence="1 2">Antifungal activity. Inhibits the mycelial growth of A.niger, A.alternata and H.sativum.</text>
</comment>
<comment type="catalytic activity">
    <reaction evidence="1 2">
        <text>Random endo-hydrolysis of N-acetyl-beta-D-glucosaminide (1-&gt;4)-beta-linkages in chitin and chitodextrins.</text>
        <dbReference type="EC" id="3.2.1.14"/>
    </reaction>
</comment>
<comment type="activity regulation">
    <text evidence="1 2">Inhibited by divalent metal ions. Maximum inhibition observed with Ca(2+) while the least inhibition was observed with Fe(2+). Inhibited by high concentrations of GlcNAc.</text>
</comment>
<comment type="biophysicochemical properties">
    <phDependence>
        <text evidence="1 2">Optimum pH is 6-8. There is a 37.7% decrease in activity at pH 5 and a 39.8% decrease in activity at pH 9.</text>
    </phDependence>
    <temperatureDependence>
        <text evidence="1 2">Optimum temperature is 35 degrees Celsius.</text>
    </temperatureDependence>
</comment>
<comment type="similarity">
    <text evidence="1 2">Belongs to the glycosyl hydrolase 18 family. Chitinase class II subfamily.</text>
</comment>